<protein>
    <recommendedName>
        <fullName>3-hexulose-6-phosphate synthase</fullName>
        <shortName>HPS</shortName>
        <ecNumber>4.1.2.43</ecNumber>
    </recommendedName>
    <alternativeName>
        <fullName>D-arabino-3-hexulose-6-phosphate formaldehyde lyase</fullName>
    </alternativeName>
</protein>
<evidence type="ECO:0000250" key="1"/>
<evidence type="ECO:0000305" key="2"/>
<reference key="1">
    <citation type="journal article" date="2002" name="Lancet">
        <title>Genome and virulence determinants of high virulence community-acquired MRSA.</title>
        <authorList>
            <person name="Baba T."/>
            <person name="Takeuchi F."/>
            <person name="Kuroda M."/>
            <person name="Yuzawa H."/>
            <person name="Aoki K."/>
            <person name="Oguchi A."/>
            <person name="Nagai Y."/>
            <person name="Iwama N."/>
            <person name="Asano K."/>
            <person name="Naimi T."/>
            <person name="Kuroda H."/>
            <person name="Cui L."/>
            <person name="Yamamoto K."/>
            <person name="Hiramatsu K."/>
        </authorList>
    </citation>
    <scope>NUCLEOTIDE SEQUENCE [LARGE SCALE GENOMIC DNA]</scope>
    <source>
        <strain>MW2</strain>
    </source>
</reference>
<dbReference type="EC" id="4.1.2.43"/>
<dbReference type="EMBL" id="BA000033">
    <property type="protein sequence ID" value="BAB94390.1"/>
    <property type="molecule type" value="Genomic_DNA"/>
</dbReference>
<dbReference type="SMR" id="Q8NXX1"/>
<dbReference type="KEGG" id="sam:MW0525"/>
<dbReference type="HOGENOM" id="CLU_081825_1_0_9"/>
<dbReference type="UniPathway" id="UPA00294">
    <property type="reaction ID" value="UER00434"/>
</dbReference>
<dbReference type="GO" id="GO:0033982">
    <property type="term" value="F:3-dehydro-L-gulonate-6-phosphate decarboxylase activity"/>
    <property type="evidence" value="ECO:0007669"/>
    <property type="project" value="TreeGrafter"/>
</dbReference>
<dbReference type="GO" id="GO:0043801">
    <property type="term" value="F:hexulose-6-phosphate synthase activity"/>
    <property type="evidence" value="ECO:0007669"/>
    <property type="project" value="UniProtKB-EC"/>
</dbReference>
<dbReference type="GO" id="GO:0004590">
    <property type="term" value="F:orotidine-5'-phosphate decarboxylase activity"/>
    <property type="evidence" value="ECO:0007669"/>
    <property type="project" value="InterPro"/>
</dbReference>
<dbReference type="GO" id="GO:0006207">
    <property type="term" value="P:'de novo' pyrimidine nucleobase biosynthetic process"/>
    <property type="evidence" value="ECO:0007669"/>
    <property type="project" value="InterPro"/>
</dbReference>
<dbReference type="GO" id="GO:0019647">
    <property type="term" value="P:formaldehyde assimilation via ribulose monophosphate cycle"/>
    <property type="evidence" value="ECO:0007669"/>
    <property type="project" value="UniProtKB-UniPathway"/>
</dbReference>
<dbReference type="GO" id="GO:0019854">
    <property type="term" value="P:L-ascorbic acid catabolic process"/>
    <property type="evidence" value="ECO:0007669"/>
    <property type="project" value="TreeGrafter"/>
</dbReference>
<dbReference type="GO" id="GO:0006730">
    <property type="term" value="P:one-carbon metabolic process"/>
    <property type="evidence" value="ECO:0007669"/>
    <property type="project" value="UniProtKB-KW"/>
</dbReference>
<dbReference type="CDD" id="cd04726">
    <property type="entry name" value="KGPDC_HPS"/>
    <property type="match status" value="1"/>
</dbReference>
<dbReference type="FunFam" id="3.20.20.70:FF:000022">
    <property type="entry name" value="3-keto-L-gulonate-6-phosphate decarboxylase UlaD"/>
    <property type="match status" value="1"/>
</dbReference>
<dbReference type="Gene3D" id="3.20.20.70">
    <property type="entry name" value="Aldolase class I"/>
    <property type="match status" value="1"/>
</dbReference>
<dbReference type="InterPro" id="IPR017553">
    <property type="entry name" value="3-hexulose-6-phosphate_synth"/>
</dbReference>
<dbReference type="InterPro" id="IPR013785">
    <property type="entry name" value="Aldolase_TIM"/>
</dbReference>
<dbReference type="InterPro" id="IPR041710">
    <property type="entry name" value="HPS/KGPDC"/>
</dbReference>
<dbReference type="InterPro" id="IPR001754">
    <property type="entry name" value="OMPdeCOase_dom"/>
</dbReference>
<dbReference type="InterPro" id="IPR011060">
    <property type="entry name" value="RibuloseP-bd_barrel"/>
</dbReference>
<dbReference type="NCBIfam" id="TIGR03128">
    <property type="entry name" value="RuMP_HxlA"/>
    <property type="match status" value="1"/>
</dbReference>
<dbReference type="PANTHER" id="PTHR35039">
    <property type="entry name" value="3-KETO-L-GULONATE-6-PHOSPHATE DECARBOXYLASE SGBH-RELATED"/>
    <property type="match status" value="1"/>
</dbReference>
<dbReference type="PANTHER" id="PTHR35039:SF3">
    <property type="entry name" value="3-KETO-L-GULONATE-6-PHOSPHATE DECARBOXYLASE SGBH-RELATED"/>
    <property type="match status" value="1"/>
</dbReference>
<dbReference type="Pfam" id="PF00215">
    <property type="entry name" value="OMPdecase"/>
    <property type="match status" value="1"/>
</dbReference>
<dbReference type="SMART" id="SM00934">
    <property type="entry name" value="OMPdecase"/>
    <property type="match status" value="1"/>
</dbReference>
<dbReference type="SUPFAM" id="SSF51366">
    <property type="entry name" value="Ribulose-phoshate binding barrel"/>
    <property type="match status" value="1"/>
</dbReference>
<keyword id="KW-0119">Carbohydrate metabolism</keyword>
<keyword id="KW-0456">Lyase</keyword>
<keyword id="KW-0554">One-carbon metabolism</keyword>
<feature type="chain" id="PRO_0000269523" description="3-hexulose-6-phosphate synthase">
    <location>
        <begin position="1"/>
        <end position="210"/>
    </location>
</feature>
<gene>
    <name type="ordered locus">MW0525</name>
</gene>
<organism>
    <name type="scientific">Staphylococcus aureus (strain MW2)</name>
    <dbReference type="NCBI Taxonomy" id="196620"/>
    <lineage>
        <taxon>Bacteria</taxon>
        <taxon>Bacillati</taxon>
        <taxon>Bacillota</taxon>
        <taxon>Bacilli</taxon>
        <taxon>Bacillales</taxon>
        <taxon>Staphylococcaceae</taxon>
        <taxon>Staphylococcus</taxon>
    </lineage>
</organism>
<comment type="function">
    <text evidence="1">Catalyzes the condensation of ribulose 5-phosphate with formaldehyde to form 3-hexulose 6-phosphate.</text>
</comment>
<comment type="catalytic activity">
    <reaction>
        <text>D-ribulose 5-phosphate + formaldehyde = D-arabino-hex-3-ulose 6-phosphate</text>
        <dbReference type="Rhea" id="RHEA:25201"/>
        <dbReference type="ChEBI" id="CHEBI:16842"/>
        <dbReference type="ChEBI" id="CHEBI:58121"/>
        <dbReference type="ChEBI" id="CHEBI:58542"/>
        <dbReference type="EC" id="4.1.2.43"/>
    </reaction>
</comment>
<comment type="pathway">
    <text>One-carbon metabolism; formaldehyde assimilation via RuMP pathway; D-fructose 6-phosphate from D-ribulose 5-phosphate and formaldehyde: step 1/2.</text>
</comment>
<comment type="similarity">
    <text evidence="2">Belongs to the HPS/KGPDC family. HPS subfamily.</text>
</comment>
<name>HPS_STAAW</name>
<proteinExistence type="inferred from homology"/>
<accession>Q8NXX1</accession>
<sequence length="210" mass="22450">MELQLAIDLLNKEDAAELANKVKDYVDIVEIGTPIIYNEGLPAVKHMADNISNVKVLADMKIMDAADYEVSQAIKFGADVITILGVAEDASIKAAIEEAHKNNKQLLVDMIAVQDLEKRAKELDEMGADYIAVHTGYDLQAEGQSPLESLRTVKSVIKNSKVAVAGGIKPDTIKEIVAESPDLVIVGGGIANADDPVEAAKQCRAAIEGK</sequence>